<feature type="chain" id="PRO_0000174356" description="Probable GDP-L-fucose synthase 1">
    <location>
        <begin position="1"/>
        <end position="328"/>
    </location>
</feature>
<feature type="active site" description="Proton donor/acceptor" evidence="1">
    <location>
        <position position="152"/>
    </location>
</feature>
<feature type="binding site" evidence="1">
    <location>
        <begin position="25"/>
        <end position="31"/>
    </location>
    <ligand>
        <name>NADP(+)</name>
        <dbReference type="ChEBI" id="CHEBI:58349"/>
    </ligand>
</feature>
<feature type="binding site" evidence="1">
    <location>
        <position position="156"/>
    </location>
    <ligand>
        <name>NADP(+)</name>
        <dbReference type="ChEBI" id="CHEBI:58349"/>
    </ligand>
</feature>
<feature type="binding site" evidence="1">
    <location>
        <begin position="179"/>
        <end position="182"/>
    </location>
    <ligand>
        <name>NADP(+)</name>
        <dbReference type="ChEBI" id="CHEBI:58349"/>
    </ligand>
</feature>
<feature type="binding site" evidence="1">
    <location>
        <position position="195"/>
    </location>
    <ligand>
        <name>NADP(+)</name>
        <dbReference type="ChEBI" id="CHEBI:58349"/>
    </ligand>
</feature>
<feature type="binding site" evidence="1">
    <location>
        <position position="203"/>
    </location>
    <ligand>
        <name>substrate</name>
    </ligand>
</feature>
<feature type="binding site" evidence="1">
    <location>
        <position position="218"/>
    </location>
    <ligand>
        <name>substrate</name>
    </ligand>
</feature>
<feature type="binding site" evidence="1">
    <location>
        <position position="225"/>
    </location>
    <ligand>
        <name>substrate</name>
    </ligand>
</feature>
<feature type="binding site" evidence="1">
    <location>
        <position position="285"/>
    </location>
    <ligand>
        <name>substrate</name>
    </ligand>
</feature>
<feature type="site" description="Important for catalytic activity" evidence="1">
    <location>
        <position position="123"/>
    </location>
</feature>
<feature type="site" description="Important for catalytic activity" evidence="1">
    <location>
        <position position="125"/>
    </location>
</feature>
<feature type="site" description="Lowers pKa of active site Tyr" evidence="1">
    <location>
        <position position="156"/>
    </location>
</feature>
<feature type="sequence conflict" description="In Ref. 5; AK071960." evidence="3" ref="5">
    <original>G</original>
    <variation>S</variation>
    <location>
        <position position="28"/>
    </location>
</feature>
<gene>
    <name type="ordered locus">Os06g0652400</name>
    <name type="ordered locus">LOC_Os06g44270</name>
    <name evidence="4" type="ORF">OsJ_22191</name>
    <name type="ORF">OSJNBa0085J13.7</name>
</gene>
<organism>
    <name type="scientific">Oryza sativa subsp. japonica</name>
    <name type="common">Rice</name>
    <dbReference type="NCBI Taxonomy" id="39947"/>
    <lineage>
        <taxon>Eukaryota</taxon>
        <taxon>Viridiplantae</taxon>
        <taxon>Streptophyta</taxon>
        <taxon>Embryophyta</taxon>
        <taxon>Tracheophyta</taxon>
        <taxon>Spermatophyta</taxon>
        <taxon>Magnoliopsida</taxon>
        <taxon>Liliopsida</taxon>
        <taxon>Poales</taxon>
        <taxon>Poaceae</taxon>
        <taxon>BOP clade</taxon>
        <taxon>Oryzoideae</taxon>
        <taxon>Oryzeae</taxon>
        <taxon>Oryzinae</taxon>
        <taxon>Oryza</taxon>
        <taxon>Oryza sativa</taxon>
    </lineage>
</organism>
<reference key="1">
    <citation type="journal article" date="2005" name="Nature">
        <title>The map-based sequence of the rice genome.</title>
        <authorList>
            <consortium name="International rice genome sequencing project (IRGSP)"/>
        </authorList>
    </citation>
    <scope>NUCLEOTIDE SEQUENCE [LARGE SCALE GENOMIC DNA]</scope>
    <source>
        <strain>cv. Nipponbare</strain>
    </source>
</reference>
<reference key="2">
    <citation type="journal article" date="2008" name="Nucleic Acids Res.">
        <title>The rice annotation project database (RAP-DB): 2008 update.</title>
        <authorList>
            <consortium name="The rice annotation project (RAP)"/>
        </authorList>
    </citation>
    <scope>GENOME REANNOTATION</scope>
    <source>
        <strain>cv. Nipponbare</strain>
    </source>
</reference>
<reference key="3">
    <citation type="journal article" date="2013" name="Rice">
        <title>Improvement of the Oryza sativa Nipponbare reference genome using next generation sequence and optical map data.</title>
        <authorList>
            <person name="Kawahara Y."/>
            <person name="de la Bastide M."/>
            <person name="Hamilton J.P."/>
            <person name="Kanamori H."/>
            <person name="McCombie W.R."/>
            <person name="Ouyang S."/>
            <person name="Schwartz D.C."/>
            <person name="Tanaka T."/>
            <person name="Wu J."/>
            <person name="Zhou S."/>
            <person name="Childs K.L."/>
            <person name="Davidson R.M."/>
            <person name="Lin H."/>
            <person name="Quesada-Ocampo L."/>
            <person name="Vaillancourt B."/>
            <person name="Sakai H."/>
            <person name="Lee S.S."/>
            <person name="Kim J."/>
            <person name="Numa H."/>
            <person name="Itoh T."/>
            <person name="Buell C.R."/>
            <person name="Matsumoto T."/>
        </authorList>
    </citation>
    <scope>GENOME REANNOTATION</scope>
    <source>
        <strain>cv. Nipponbare</strain>
    </source>
</reference>
<reference key="4">
    <citation type="journal article" date="2005" name="PLoS Biol.">
        <title>The genomes of Oryza sativa: a history of duplications.</title>
        <authorList>
            <person name="Yu J."/>
            <person name="Wang J."/>
            <person name="Lin W."/>
            <person name="Li S."/>
            <person name="Li H."/>
            <person name="Zhou J."/>
            <person name="Ni P."/>
            <person name="Dong W."/>
            <person name="Hu S."/>
            <person name="Zeng C."/>
            <person name="Zhang J."/>
            <person name="Zhang Y."/>
            <person name="Li R."/>
            <person name="Xu Z."/>
            <person name="Li S."/>
            <person name="Li X."/>
            <person name="Zheng H."/>
            <person name="Cong L."/>
            <person name="Lin L."/>
            <person name="Yin J."/>
            <person name="Geng J."/>
            <person name="Li G."/>
            <person name="Shi J."/>
            <person name="Liu J."/>
            <person name="Lv H."/>
            <person name="Li J."/>
            <person name="Wang J."/>
            <person name="Deng Y."/>
            <person name="Ran L."/>
            <person name="Shi X."/>
            <person name="Wang X."/>
            <person name="Wu Q."/>
            <person name="Li C."/>
            <person name="Ren X."/>
            <person name="Wang J."/>
            <person name="Wang X."/>
            <person name="Li D."/>
            <person name="Liu D."/>
            <person name="Zhang X."/>
            <person name="Ji Z."/>
            <person name="Zhao W."/>
            <person name="Sun Y."/>
            <person name="Zhang Z."/>
            <person name="Bao J."/>
            <person name="Han Y."/>
            <person name="Dong L."/>
            <person name="Ji J."/>
            <person name="Chen P."/>
            <person name="Wu S."/>
            <person name="Liu J."/>
            <person name="Xiao Y."/>
            <person name="Bu D."/>
            <person name="Tan J."/>
            <person name="Yang L."/>
            <person name="Ye C."/>
            <person name="Zhang J."/>
            <person name="Xu J."/>
            <person name="Zhou Y."/>
            <person name="Yu Y."/>
            <person name="Zhang B."/>
            <person name="Zhuang S."/>
            <person name="Wei H."/>
            <person name="Liu B."/>
            <person name="Lei M."/>
            <person name="Yu H."/>
            <person name="Li Y."/>
            <person name="Xu H."/>
            <person name="Wei S."/>
            <person name="He X."/>
            <person name="Fang L."/>
            <person name="Zhang Z."/>
            <person name="Zhang Y."/>
            <person name="Huang X."/>
            <person name="Su Z."/>
            <person name="Tong W."/>
            <person name="Li J."/>
            <person name="Tong Z."/>
            <person name="Li S."/>
            <person name="Ye J."/>
            <person name="Wang L."/>
            <person name="Fang L."/>
            <person name="Lei T."/>
            <person name="Chen C.-S."/>
            <person name="Chen H.-C."/>
            <person name="Xu Z."/>
            <person name="Li H."/>
            <person name="Huang H."/>
            <person name="Zhang F."/>
            <person name="Xu H."/>
            <person name="Li N."/>
            <person name="Zhao C."/>
            <person name="Li S."/>
            <person name="Dong L."/>
            <person name="Huang Y."/>
            <person name="Li L."/>
            <person name="Xi Y."/>
            <person name="Qi Q."/>
            <person name="Li W."/>
            <person name="Zhang B."/>
            <person name="Hu W."/>
            <person name="Zhang Y."/>
            <person name="Tian X."/>
            <person name="Jiao Y."/>
            <person name="Liang X."/>
            <person name="Jin J."/>
            <person name="Gao L."/>
            <person name="Zheng W."/>
            <person name="Hao B."/>
            <person name="Liu S.-M."/>
            <person name="Wang W."/>
            <person name="Yuan L."/>
            <person name="Cao M."/>
            <person name="McDermott J."/>
            <person name="Samudrala R."/>
            <person name="Wang J."/>
            <person name="Wong G.K.-S."/>
            <person name="Yang H."/>
        </authorList>
    </citation>
    <scope>NUCLEOTIDE SEQUENCE [LARGE SCALE GENOMIC DNA]</scope>
    <source>
        <strain>cv. Nipponbare</strain>
    </source>
</reference>
<reference key="5">
    <citation type="journal article" date="2003" name="Science">
        <title>Collection, mapping, and annotation of over 28,000 cDNA clones from japonica rice.</title>
        <authorList>
            <consortium name="The rice full-length cDNA consortium"/>
        </authorList>
    </citation>
    <scope>NUCLEOTIDE SEQUENCE [LARGE SCALE MRNA]</scope>
    <source>
        <strain>cv. Nipponbare</strain>
    </source>
</reference>
<name>FCL1_ORYSJ</name>
<protein>
    <recommendedName>
        <fullName>Probable GDP-L-fucose synthase 1</fullName>
        <ecNumber evidence="2">1.1.1.271</ecNumber>
    </recommendedName>
    <alternativeName>
        <fullName>GDP-4-keto-6-deoxy-D-mannose-3,5-epimerase-4-reductase 1</fullName>
    </alternativeName>
</protein>
<comment type="function">
    <text evidence="2">Catalyzes the two-step NADP-dependent conversion of GDP-4-dehydro-6-deoxy-D-mannose to GDP-fucose, involving an epimerase and a reductase reaction.</text>
</comment>
<comment type="catalytic activity">
    <reaction evidence="2">
        <text>GDP-beta-L-fucose + NADP(+) = GDP-4-dehydro-alpha-D-rhamnose + NADPH + H(+)</text>
        <dbReference type="Rhea" id="RHEA:18885"/>
        <dbReference type="ChEBI" id="CHEBI:15378"/>
        <dbReference type="ChEBI" id="CHEBI:57273"/>
        <dbReference type="ChEBI" id="CHEBI:57783"/>
        <dbReference type="ChEBI" id="CHEBI:57964"/>
        <dbReference type="ChEBI" id="CHEBI:58349"/>
        <dbReference type="EC" id="1.1.1.271"/>
    </reaction>
</comment>
<comment type="pathway">
    <text>Nucleotide-sugar biosynthesis; GDP-L-fucose biosynthesis via de novo pathway; GDP-L-fucose from GDP-alpha-D-mannose: step 2/2.</text>
</comment>
<comment type="subunit">
    <text evidence="1">Homodimer.</text>
</comment>
<comment type="similarity">
    <text evidence="3">Belongs to the NAD(P)-dependent epimerase/dehydratase family. Fucose synthase subfamily.</text>
</comment>
<evidence type="ECO:0000250" key="1"/>
<evidence type="ECO:0000250" key="2">
    <source>
        <dbReference type="UniProtKB" id="O49213"/>
    </source>
</evidence>
<evidence type="ECO:0000305" key="3"/>
<evidence type="ECO:0000312" key="4">
    <source>
        <dbReference type="EMBL" id="EAZ37847.1"/>
    </source>
</evidence>
<dbReference type="EC" id="1.1.1.271" evidence="2"/>
<dbReference type="EMBL" id="AP003565">
    <property type="protein sequence ID" value="BAD37407.1"/>
    <property type="molecule type" value="Genomic_DNA"/>
</dbReference>
<dbReference type="EMBL" id="AP008212">
    <property type="protein sequence ID" value="BAF20149.1"/>
    <property type="molecule type" value="Genomic_DNA"/>
</dbReference>
<dbReference type="EMBL" id="AP014962">
    <property type="protein sequence ID" value="BAS98916.1"/>
    <property type="molecule type" value="Genomic_DNA"/>
</dbReference>
<dbReference type="EMBL" id="CM000143">
    <property type="protein sequence ID" value="EAZ37847.1"/>
    <property type="molecule type" value="Genomic_DNA"/>
</dbReference>
<dbReference type="EMBL" id="AK071960">
    <property type="status" value="NOT_ANNOTATED_CDS"/>
    <property type="molecule type" value="mRNA"/>
</dbReference>
<dbReference type="EMBL" id="AK103529">
    <property type="protein sequence ID" value="BAG96133.1"/>
    <property type="molecule type" value="mRNA"/>
</dbReference>
<dbReference type="EMBL" id="AK120997">
    <property type="protein sequence ID" value="BAH00264.1"/>
    <property type="molecule type" value="mRNA"/>
</dbReference>
<dbReference type="RefSeq" id="XP_015644414.1">
    <property type="nucleotide sequence ID" value="XM_015788928.1"/>
</dbReference>
<dbReference type="SMR" id="Q67WR2"/>
<dbReference type="BioGRID" id="810736">
    <property type="interactions" value="1"/>
</dbReference>
<dbReference type="FunCoup" id="Q67WR2">
    <property type="interactions" value="1857"/>
</dbReference>
<dbReference type="STRING" id="39947.Q67WR2"/>
<dbReference type="PaxDb" id="39947-Q67WR2"/>
<dbReference type="EnsemblPlants" id="Os06t0652400-01">
    <property type="protein sequence ID" value="Os06t0652400-01"/>
    <property type="gene ID" value="Os06g0652400"/>
</dbReference>
<dbReference type="EnsemblPlants" id="Os06t0652400-02">
    <property type="protein sequence ID" value="Os06t0652400-02"/>
    <property type="gene ID" value="Os06g0652400"/>
</dbReference>
<dbReference type="Gramene" id="Os06t0652400-01">
    <property type="protein sequence ID" value="Os06t0652400-01"/>
    <property type="gene ID" value="Os06g0652400"/>
</dbReference>
<dbReference type="Gramene" id="Os06t0652400-02">
    <property type="protein sequence ID" value="Os06t0652400-02"/>
    <property type="gene ID" value="Os06g0652400"/>
</dbReference>
<dbReference type="KEGG" id="dosa:Os06g0652400"/>
<dbReference type="eggNOG" id="KOG1431">
    <property type="taxonomic scope" value="Eukaryota"/>
</dbReference>
<dbReference type="HOGENOM" id="CLU_007383_18_0_1"/>
<dbReference type="InParanoid" id="Q67WR2"/>
<dbReference type="OMA" id="HPSNYGY"/>
<dbReference type="OrthoDB" id="202470at2759"/>
<dbReference type="PlantReactome" id="R-OSA-1119620">
    <property type="pathway name" value="GDP-L-fucose biosynthesis I (from GDP-D-mannose)"/>
</dbReference>
<dbReference type="UniPathway" id="UPA00128">
    <property type="reaction ID" value="UER00191"/>
</dbReference>
<dbReference type="Proteomes" id="UP000000763">
    <property type="component" value="Chromosome 6"/>
</dbReference>
<dbReference type="Proteomes" id="UP000007752">
    <property type="component" value="Chromosome 6"/>
</dbReference>
<dbReference type="Proteomes" id="UP000059680">
    <property type="component" value="Chromosome 6"/>
</dbReference>
<dbReference type="GO" id="GO:0050577">
    <property type="term" value="F:GDP-L-fucose synthase activity"/>
    <property type="evidence" value="ECO:0000318"/>
    <property type="project" value="GO_Central"/>
</dbReference>
<dbReference type="GO" id="GO:0016853">
    <property type="term" value="F:isomerase activity"/>
    <property type="evidence" value="ECO:0007669"/>
    <property type="project" value="UniProtKB-KW"/>
</dbReference>
<dbReference type="GO" id="GO:0042351">
    <property type="term" value="P:'de novo' GDP-L-fucose biosynthetic process"/>
    <property type="evidence" value="ECO:0007669"/>
    <property type="project" value="UniProtKB-UniPathway"/>
</dbReference>
<dbReference type="CDD" id="cd05239">
    <property type="entry name" value="GDP_FS_SDR_e"/>
    <property type="match status" value="1"/>
</dbReference>
<dbReference type="FunFam" id="3.40.50.720:FF:000101">
    <property type="entry name" value="GDP-L-fucose synthase"/>
    <property type="match status" value="1"/>
</dbReference>
<dbReference type="Gene3D" id="3.40.50.720">
    <property type="entry name" value="NAD(P)-binding Rossmann-like Domain"/>
    <property type="match status" value="1"/>
</dbReference>
<dbReference type="Gene3D" id="3.90.25.10">
    <property type="entry name" value="UDP-galactose 4-epimerase, domain 1"/>
    <property type="match status" value="1"/>
</dbReference>
<dbReference type="HAMAP" id="MF_00956">
    <property type="entry name" value="GDP_fucose_synth"/>
    <property type="match status" value="1"/>
</dbReference>
<dbReference type="InterPro" id="IPR001509">
    <property type="entry name" value="Epimerase_deHydtase"/>
</dbReference>
<dbReference type="InterPro" id="IPR028614">
    <property type="entry name" value="GDP_fucose/colitose_synth"/>
</dbReference>
<dbReference type="InterPro" id="IPR036291">
    <property type="entry name" value="NAD(P)-bd_dom_sf"/>
</dbReference>
<dbReference type="PANTHER" id="PTHR43238">
    <property type="entry name" value="GDP-L-FUCOSE SYNTHASE"/>
    <property type="match status" value="1"/>
</dbReference>
<dbReference type="PANTHER" id="PTHR43238:SF1">
    <property type="entry name" value="GDP-L-FUCOSE SYNTHASE"/>
    <property type="match status" value="1"/>
</dbReference>
<dbReference type="Pfam" id="PF01370">
    <property type="entry name" value="Epimerase"/>
    <property type="match status" value="1"/>
</dbReference>
<dbReference type="SUPFAM" id="SSF51735">
    <property type="entry name" value="NAD(P)-binding Rossmann-fold domains"/>
    <property type="match status" value="1"/>
</dbReference>
<accession>Q67WR2</accession>
<accession>Q0DAH4</accession>
<sequence length="328" mass="35715">MGTVTTADPHASFLADKGGKVFVAGHRGLVGSAILRHLVSLGFTNVVVRTHAELDLTRQSDVEAFFAAELPRYVVLAAAKVGGIHANSTFPADFIAANLQIQTNVVDAALKCGSVRKLLFLGSSCIYPKFAPQPIPENSLLSGPLEPTNEWYAVAKIAGIKMCQAYRIQHGFDAISAMPTNLYGPQDNFHPENSHVLPALIRRFHEAKASNAAEVVVWGTGSPLREFLHVDDLADAVIFLMDHYSGLEHVNVGSGSEVTIKELAELVKEVVGFQGKLVWDSSKPDGTPRKLMDSSKIQEMGWKPKVPLKEGLVETYKWYVENVISAKK</sequence>
<proteinExistence type="evidence at transcript level"/>
<keyword id="KW-0413">Isomerase</keyword>
<keyword id="KW-0511">Multifunctional enzyme</keyword>
<keyword id="KW-0521">NADP</keyword>
<keyword id="KW-0560">Oxidoreductase</keyword>
<keyword id="KW-1185">Reference proteome</keyword>